<gene>
    <name evidence="1" type="primary">purM</name>
    <name type="ordered locus">SbBS512_E2873</name>
</gene>
<accession>B2TXS4</accession>
<dbReference type="EC" id="6.3.3.1" evidence="1"/>
<dbReference type="EMBL" id="CP001063">
    <property type="protein sequence ID" value="ACD06590.1"/>
    <property type="molecule type" value="Genomic_DNA"/>
</dbReference>
<dbReference type="RefSeq" id="WP_001295474.1">
    <property type="nucleotide sequence ID" value="NC_010658.1"/>
</dbReference>
<dbReference type="SMR" id="B2TXS4"/>
<dbReference type="STRING" id="344609.SbBS512_E2873"/>
<dbReference type="GeneID" id="93774637"/>
<dbReference type="KEGG" id="sbc:SbBS512_E2873"/>
<dbReference type="HOGENOM" id="CLU_047116_0_0_6"/>
<dbReference type="UniPathway" id="UPA00074">
    <property type="reaction ID" value="UER00129"/>
</dbReference>
<dbReference type="Proteomes" id="UP000001030">
    <property type="component" value="Chromosome"/>
</dbReference>
<dbReference type="GO" id="GO:0005829">
    <property type="term" value="C:cytosol"/>
    <property type="evidence" value="ECO:0007669"/>
    <property type="project" value="TreeGrafter"/>
</dbReference>
<dbReference type="GO" id="GO:0005524">
    <property type="term" value="F:ATP binding"/>
    <property type="evidence" value="ECO:0007669"/>
    <property type="project" value="UniProtKB-KW"/>
</dbReference>
<dbReference type="GO" id="GO:0004637">
    <property type="term" value="F:phosphoribosylamine-glycine ligase activity"/>
    <property type="evidence" value="ECO:0007669"/>
    <property type="project" value="TreeGrafter"/>
</dbReference>
<dbReference type="GO" id="GO:0004641">
    <property type="term" value="F:phosphoribosylformylglycinamidine cyclo-ligase activity"/>
    <property type="evidence" value="ECO:0007669"/>
    <property type="project" value="UniProtKB-UniRule"/>
</dbReference>
<dbReference type="GO" id="GO:0006189">
    <property type="term" value="P:'de novo' IMP biosynthetic process"/>
    <property type="evidence" value="ECO:0007669"/>
    <property type="project" value="UniProtKB-UniRule"/>
</dbReference>
<dbReference type="GO" id="GO:0046084">
    <property type="term" value="P:adenine biosynthetic process"/>
    <property type="evidence" value="ECO:0007669"/>
    <property type="project" value="TreeGrafter"/>
</dbReference>
<dbReference type="CDD" id="cd02196">
    <property type="entry name" value="PurM"/>
    <property type="match status" value="1"/>
</dbReference>
<dbReference type="FunFam" id="3.30.1330.10:FF:000001">
    <property type="entry name" value="Phosphoribosylformylglycinamidine cyclo-ligase"/>
    <property type="match status" value="1"/>
</dbReference>
<dbReference type="FunFam" id="3.90.650.10:FF:000001">
    <property type="entry name" value="Phosphoribosylformylglycinamidine cyclo-ligase"/>
    <property type="match status" value="1"/>
</dbReference>
<dbReference type="Gene3D" id="3.90.650.10">
    <property type="entry name" value="PurM-like C-terminal domain"/>
    <property type="match status" value="1"/>
</dbReference>
<dbReference type="Gene3D" id="3.30.1330.10">
    <property type="entry name" value="PurM-like, N-terminal domain"/>
    <property type="match status" value="1"/>
</dbReference>
<dbReference type="HAMAP" id="MF_00741">
    <property type="entry name" value="AIRS"/>
    <property type="match status" value="1"/>
</dbReference>
<dbReference type="InterPro" id="IPR010918">
    <property type="entry name" value="PurM-like_C_dom"/>
</dbReference>
<dbReference type="InterPro" id="IPR036676">
    <property type="entry name" value="PurM-like_C_sf"/>
</dbReference>
<dbReference type="InterPro" id="IPR016188">
    <property type="entry name" value="PurM-like_N"/>
</dbReference>
<dbReference type="InterPro" id="IPR036921">
    <property type="entry name" value="PurM-like_N_sf"/>
</dbReference>
<dbReference type="InterPro" id="IPR004733">
    <property type="entry name" value="PurM_cligase"/>
</dbReference>
<dbReference type="NCBIfam" id="TIGR00878">
    <property type="entry name" value="purM"/>
    <property type="match status" value="1"/>
</dbReference>
<dbReference type="PANTHER" id="PTHR10520:SF12">
    <property type="entry name" value="TRIFUNCTIONAL PURINE BIOSYNTHETIC PROTEIN ADENOSINE-3"/>
    <property type="match status" value="1"/>
</dbReference>
<dbReference type="PANTHER" id="PTHR10520">
    <property type="entry name" value="TRIFUNCTIONAL PURINE BIOSYNTHETIC PROTEIN ADENOSINE-3-RELATED"/>
    <property type="match status" value="1"/>
</dbReference>
<dbReference type="Pfam" id="PF00586">
    <property type="entry name" value="AIRS"/>
    <property type="match status" value="1"/>
</dbReference>
<dbReference type="Pfam" id="PF02769">
    <property type="entry name" value="AIRS_C"/>
    <property type="match status" value="1"/>
</dbReference>
<dbReference type="SUPFAM" id="SSF56042">
    <property type="entry name" value="PurM C-terminal domain-like"/>
    <property type="match status" value="1"/>
</dbReference>
<dbReference type="SUPFAM" id="SSF55326">
    <property type="entry name" value="PurM N-terminal domain-like"/>
    <property type="match status" value="1"/>
</dbReference>
<reference key="1">
    <citation type="submission" date="2008-05" db="EMBL/GenBank/DDBJ databases">
        <title>Complete sequence of Shigella boydii serotype 18 strain BS512.</title>
        <authorList>
            <person name="Rasko D.A."/>
            <person name="Rosovitz M."/>
            <person name="Maurelli A.T."/>
            <person name="Myers G."/>
            <person name="Seshadri R."/>
            <person name="Cer R."/>
            <person name="Jiang L."/>
            <person name="Ravel J."/>
            <person name="Sebastian Y."/>
        </authorList>
    </citation>
    <scope>NUCLEOTIDE SEQUENCE [LARGE SCALE GENOMIC DNA]</scope>
    <source>
        <strain>CDC 3083-94 / BS512</strain>
    </source>
</reference>
<keyword id="KW-0067">ATP-binding</keyword>
<keyword id="KW-0963">Cytoplasm</keyword>
<keyword id="KW-0436">Ligase</keyword>
<keyword id="KW-0547">Nucleotide-binding</keyword>
<keyword id="KW-0658">Purine biosynthesis</keyword>
<keyword id="KW-1185">Reference proteome</keyword>
<proteinExistence type="inferred from homology"/>
<feature type="chain" id="PRO_1000193044" description="Phosphoribosylformylglycinamidine cyclo-ligase">
    <location>
        <begin position="1"/>
        <end position="345"/>
    </location>
</feature>
<comment type="catalytic activity">
    <reaction evidence="1">
        <text>2-formamido-N(1)-(5-O-phospho-beta-D-ribosyl)acetamidine + ATP = 5-amino-1-(5-phospho-beta-D-ribosyl)imidazole + ADP + phosphate + H(+)</text>
        <dbReference type="Rhea" id="RHEA:23032"/>
        <dbReference type="ChEBI" id="CHEBI:15378"/>
        <dbReference type="ChEBI" id="CHEBI:30616"/>
        <dbReference type="ChEBI" id="CHEBI:43474"/>
        <dbReference type="ChEBI" id="CHEBI:137981"/>
        <dbReference type="ChEBI" id="CHEBI:147287"/>
        <dbReference type="ChEBI" id="CHEBI:456216"/>
        <dbReference type="EC" id="6.3.3.1"/>
    </reaction>
</comment>
<comment type="pathway">
    <text evidence="1">Purine metabolism; IMP biosynthesis via de novo pathway; 5-amino-1-(5-phospho-D-ribosyl)imidazole from N(2)-formyl-N(1)-(5-phospho-D-ribosyl)glycinamide: step 2/2.</text>
</comment>
<comment type="subcellular location">
    <subcellularLocation>
        <location evidence="1">Cytoplasm</location>
    </subcellularLocation>
</comment>
<comment type="similarity">
    <text evidence="1">Belongs to the AIR synthase family.</text>
</comment>
<protein>
    <recommendedName>
        <fullName evidence="1">Phosphoribosylformylglycinamidine cyclo-ligase</fullName>
        <ecNumber evidence="1">6.3.3.1</ecNumber>
    </recommendedName>
    <alternativeName>
        <fullName evidence="1">AIR synthase</fullName>
    </alternativeName>
    <alternativeName>
        <fullName evidence="1">AIRS</fullName>
    </alternativeName>
    <alternativeName>
        <fullName evidence="1">Phosphoribosyl-aminoimidazole synthetase</fullName>
    </alternativeName>
</protein>
<sequence length="345" mass="36873">MTDKTSLSYKDAGVDIDAGNALVGRIKGVVKKTRRPEVMGGLGGFGALCALPQKYREPVLVSGTDGVGTKLRLAMDLKRHDTIGIDLVAMCVNDLVVQGAEPLFFLDYYATGKLDVDTASAVISGIAEGCLQSGCSLVGGETAEMPGMYHGEDYDVAGFCVGVVEKSEIIDGSKVSDGDVLIALGSSGPHSNGYSLVRKILEVSGCDPQTTELDGKPLADHLLAPTRIYVKSVLELIEKVDVHAIAHLTGGGFWENIPRVLPDNTQAVIDESSWQWPEVFNWLQTAGNVERHEMYRTFNCGVGMIIALPAPEVDKALALLNANGENAWKIGIIKASDSEQRVVIE</sequence>
<evidence type="ECO:0000255" key="1">
    <source>
        <dbReference type="HAMAP-Rule" id="MF_00741"/>
    </source>
</evidence>
<name>PUR5_SHIB3</name>
<organism>
    <name type="scientific">Shigella boydii serotype 18 (strain CDC 3083-94 / BS512)</name>
    <dbReference type="NCBI Taxonomy" id="344609"/>
    <lineage>
        <taxon>Bacteria</taxon>
        <taxon>Pseudomonadati</taxon>
        <taxon>Pseudomonadota</taxon>
        <taxon>Gammaproteobacteria</taxon>
        <taxon>Enterobacterales</taxon>
        <taxon>Enterobacteriaceae</taxon>
        <taxon>Shigella</taxon>
    </lineage>
</organism>